<accession>A0PPH1</accession>
<comment type="function">
    <text evidence="1">Catalyzes the specific phosphorylation of the 3-hydroxyl group of shikimic acid using ATP as a cosubstrate.</text>
</comment>
<comment type="catalytic activity">
    <reaction evidence="1">
        <text>shikimate + ATP = 3-phosphoshikimate + ADP + H(+)</text>
        <dbReference type="Rhea" id="RHEA:13121"/>
        <dbReference type="ChEBI" id="CHEBI:15378"/>
        <dbReference type="ChEBI" id="CHEBI:30616"/>
        <dbReference type="ChEBI" id="CHEBI:36208"/>
        <dbReference type="ChEBI" id="CHEBI:145989"/>
        <dbReference type="ChEBI" id="CHEBI:456216"/>
        <dbReference type="EC" id="2.7.1.71"/>
    </reaction>
</comment>
<comment type="cofactor">
    <cofactor evidence="1">
        <name>Mg(2+)</name>
        <dbReference type="ChEBI" id="CHEBI:18420"/>
    </cofactor>
    <text evidence="1">Binds 1 Mg(2+) ion per subunit.</text>
</comment>
<comment type="pathway">
    <text evidence="1">Metabolic intermediate biosynthesis; chorismate biosynthesis; chorismate from D-erythrose 4-phosphate and phosphoenolpyruvate: step 5/7.</text>
</comment>
<comment type="subunit">
    <text evidence="1">Monomer.</text>
</comment>
<comment type="subcellular location">
    <subcellularLocation>
        <location evidence="1">Cytoplasm</location>
    </subcellularLocation>
</comment>
<comment type="similarity">
    <text evidence="1">Belongs to the shikimate kinase family.</text>
</comment>
<name>AROK_MYCUA</name>
<feature type="chain" id="PRO_1000022983" description="Shikimate kinase">
    <location>
        <begin position="1"/>
        <end position="184"/>
    </location>
</feature>
<feature type="region of interest" description="Disordered" evidence="2">
    <location>
        <begin position="164"/>
        <end position="184"/>
    </location>
</feature>
<feature type="compositionally biased region" description="Low complexity" evidence="2">
    <location>
        <begin position="169"/>
        <end position="184"/>
    </location>
</feature>
<feature type="binding site" evidence="1">
    <location>
        <begin position="12"/>
        <end position="17"/>
    </location>
    <ligand>
        <name>ATP</name>
        <dbReference type="ChEBI" id="CHEBI:30616"/>
    </ligand>
</feature>
<feature type="binding site" evidence="1">
    <location>
        <position position="16"/>
    </location>
    <ligand>
        <name>Mg(2+)</name>
        <dbReference type="ChEBI" id="CHEBI:18420"/>
    </ligand>
</feature>
<feature type="binding site" evidence="1">
    <location>
        <position position="34"/>
    </location>
    <ligand>
        <name>substrate</name>
    </ligand>
</feature>
<feature type="binding site" evidence="1">
    <location>
        <position position="58"/>
    </location>
    <ligand>
        <name>substrate</name>
    </ligand>
</feature>
<feature type="binding site" evidence="1">
    <location>
        <position position="80"/>
    </location>
    <ligand>
        <name>substrate</name>
    </ligand>
</feature>
<feature type="binding site" evidence="1">
    <location>
        <position position="117"/>
    </location>
    <ligand>
        <name>ATP</name>
        <dbReference type="ChEBI" id="CHEBI:30616"/>
    </ligand>
</feature>
<feature type="binding site" evidence="1">
    <location>
        <position position="136"/>
    </location>
    <ligand>
        <name>substrate</name>
    </ligand>
</feature>
<feature type="binding site" evidence="1">
    <location>
        <position position="153"/>
    </location>
    <ligand>
        <name>ATP</name>
        <dbReference type="ChEBI" id="CHEBI:30616"/>
    </ligand>
</feature>
<protein>
    <recommendedName>
        <fullName evidence="1">Shikimate kinase</fullName>
        <shortName evidence="1">SK</shortName>
        <ecNumber evidence="1">2.7.1.71</ecNumber>
    </recommendedName>
</protein>
<organism>
    <name type="scientific">Mycobacterium ulcerans (strain Agy99)</name>
    <dbReference type="NCBI Taxonomy" id="362242"/>
    <lineage>
        <taxon>Bacteria</taxon>
        <taxon>Bacillati</taxon>
        <taxon>Actinomycetota</taxon>
        <taxon>Actinomycetes</taxon>
        <taxon>Mycobacteriales</taxon>
        <taxon>Mycobacteriaceae</taxon>
        <taxon>Mycobacterium</taxon>
        <taxon>Mycobacterium ulcerans group</taxon>
    </lineage>
</organism>
<keyword id="KW-0028">Amino-acid biosynthesis</keyword>
<keyword id="KW-0057">Aromatic amino acid biosynthesis</keyword>
<keyword id="KW-0067">ATP-binding</keyword>
<keyword id="KW-0963">Cytoplasm</keyword>
<keyword id="KW-0418">Kinase</keyword>
<keyword id="KW-0460">Magnesium</keyword>
<keyword id="KW-0479">Metal-binding</keyword>
<keyword id="KW-0547">Nucleotide-binding</keyword>
<keyword id="KW-0808">Transferase</keyword>
<proteinExistence type="inferred from homology"/>
<gene>
    <name evidence="1" type="primary">aroK</name>
    <name type="ordered locus">MUL_1760</name>
</gene>
<dbReference type="EC" id="2.7.1.71" evidence="1"/>
<dbReference type="EMBL" id="CP000325">
    <property type="protein sequence ID" value="ABL04240.1"/>
    <property type="molecule type" value="Genomic_DNA"/>
</dbReference>
<dbReference type="RefSeq" id="WP_011739860.1">
    <property type="nucleotide sequence ID" value="NC_008611.1"/>
</dbReference>
<dbReference type="SMR" id="A0PPH1"/>
<dbReference type="KEGG" id="mul:MUL_1760"/>
<dbReference type="eggNOG" id="COG0703">
    <property type="taxonomic scope" value="Bacteria"/>
</dbReference>
<dbReference type="HOGENOM" id="CLU_057607_3_3_11"/>
<dbReference type="UniPathway" id="UPA00053">
    <property type="reaction ID" value="UER00088"/>
</dbReference>
<dbReference type="Proteomes" id="UP000000765">
    <property type="component" value="Chromosome"/>
</dbReference>
<dbReference type="GO" id="GO:0005829">
    <property type="term" value="C:cytosol"/>
    <property type="evidence" value="ECO:0007669"/>
    <property type="project" value="TreeGrafter"/>
</dbReference>
<dbReference type="GO" id="GO:0005524">
    <property type="term" value="F:ATP binding"/>
    <property type="evidence" value="ECO:0007669"/>
    <property type="project" value="UniProtKB-UniRule"/>
</dbReference>
<dbReference type="GO" id="GO:0000287">
    <property type="term" value="F:magnesium ion binding"/>
    <property type="evidence" value="ECO:0007669"/>
    <property type="project" value="UniProtKB-UniRule"/>
</dbReference>
<dbReference type="GO" id="GO:0004765">
    <property type="term" value="F:shikimate kinase activity"/>
    <property type="evidence" value="ECO:0007669"/>
    <property type="project" value="UniProtKB-UniRule"/>
</dbReference>
<dbReference type="GO" id="GO:0008652">
    <property type="term" value="P:amino acid biosynthetic process"/>
    <property type="evidence" value="ECO:0007669"/>
    <property type="project" value="UniProtKB-KW"/>
</dbReference>
<dbReference type="GO" id="GO:0009073">
    <property type="term" value="P:aromatic amino acid family biosynthetic process"/>
    <property type="evidence" value="ECO:0007669"/>
    <property type="project" value="UniProtKB-KW"/>
</dbReference>
<dbReference type="GO" id="GO:0009423">
    <property type="term" value="P:chorismate biosynthetic process"/>
    <property type="evidence" value="ECO:0007669"/>
    <property type="project" value="UniProtKB-UniRule"/>
</dbReference>
<dbReference type="CDD" id="cd00464">
    <property type="entry name" value="SK"/>
    <property type="match status" value="1"/>
</dbReference>
<dbReference type="Gene3D" id="3.40.50.300">
    <property type="entry name" value="P-loop containing nucleotide triphosphate hydrolases"/>
    <property type="match status" value="1"/>
</dbReference>
<dbReference type="HAMAP" id="MF_00109">
    <property type="entry name" value="Shikimate_kinase"/>
    <property type="match status" value="1"/>
</dbReference>
<dbReference type="InterPro" id="IPR027417">
    <property type="entry name" value="P-loop_NTPase"/>
</dbReference>
<dbReference type="InterPro" id="IPR031322">
    <property type="entry name" value="Shikimate/glucono_kinase"/>
</dbReference>
<dbReference type="InterPro" id="IPR000623">
    <property type="entry name" value="Shikimate_kinase/TSH1"/>
</dbReference>
<dbReference type="InterPro" id="IPR023000">
    <property type="entry name" value="Shikimate_kinase_CS"/>
</dbReference>
<dbReference type="PANTHER" id="PTHR21087">
    <property type="entry name" value="SHIKIMATE KINASE"/>
    <property type="match status" value="1"/>
</dbReference>
<dbReference type="PANTHER" id="PTHR21087:SF16">
    <property type="entry name" value="SHIKIMATE KINASE 1, CHLOROPLASTIC"/>
    <property type="match status" value="1"/>
</dbReference>
<dbReference type="Pfam" id="PF01202">
    <property type="entry name" value="SKI"/>
    <property type="match status" value="1"/>
</dbReference>
<dbReference type="PRINTS" id="PR01100">
    <property type="entry name" value="SHIKIMTKNASE"/>
</dbReference>
<dbReference type="SUPFAM" id="SSF52540">
    <property type="entry name" value="P-loop containing nucleoside triphosphate hydrolases"/>
    <property type="match status" value="1"/>
</dbReference>
<dbReference type="PROSITE" id="PS01128">
    <property type="entry name" value="SHIKIMATE_KINASE"/>
    <property type="match status" value="1"/>
</dbReference>
<evidence type="ECO:0000255" key="1">
    <source>
        <dbReference type="HAMAP-Rule" id="MF_00109"/>
    </source>
</evidence>
<evidence type="ECO:0000256" key="2">
    <source>
        <dbReference type="SAM" id="MobiDB-lite"/>
    </source>
</evidence>
<sequence length="184" mass="19405">MAPKAVLVGLPGSGKSTIGRRLAKALGVSLLDTDAAIEQQAGRSIAEIFATDGEEEFRRIEEEVVRAALVDHDGVLSLGGGAVTSPGVRSALDGHTVVYLEISAAEGVRRTGGSNVRPLLAGPDRAEKFRALMSQRIPLYRRVSTIRVDTNRRNPGAVVRYIMSRLDDPTPNTSPSSTASGAAT</sequence>
<reference key="1">
    <citation type="journal article" date="2007" name="Genome Res.">
        <title>Reductive evolution and niche adaptation inferred from the genome of Mycobacterium ulcerans, the causative agent of Buruli ulcer.</title>
        <authorList>
            <person name="Stinear T.P."/>
            <person name="Seemann T."/>
            <person name="Pidot S."/>
            <person name="Frigui W."/>
            <person name="Reysset G."/>
            <person name="Garnier T."/>
            <person name="Meurice G."/>
            <person name="Simon D."/>
            <person name="Bouchier C."/>
            <person name="Ma L."/>
            <person name="Tichit M."/>
            <person name="Porter J.L."/>
            <person name="Ryan J."/>
            <person name="Johnson P.D.R."/>
            <person name="Davies J.K."/>
            <person name="Jenkin G.A."/>
            <person name="Small P.L.C."/>
            <person name="Jones L.M."/>
            <person name="Tekaia F."/>
            <person name="Laval F."/>
            <person name="Daffe M."/>
            <person name="Parkhill J."/>
            <person name="Cole S.T."/>
        </authorList>
    </citation>
    <scope>NUCLEOTIDE SEQUENCE [LARGE SCALE GENOMIC DNA]</scope>
    <source>
        <strain>Agy99</strain>
    </source>
</reference>